<name>SECM_ECO55</name>
<evidence type="ECO:0000255" key="1">
    <source>
        <dbReference type="HAMAP-Rule" id="MF_01332"/>
    </source>
</evidence>
<organism>
    <name type="scientific">Escherichia coli (strain 55989 / EAEC)</name>
    <dbReference type="NCBI Taxonomy" id="585055"/>
    <lineage>
        <taxon>Bacteria</taxon>
        <taxon>Pseudomonadati</taxon>
        <taxon>Pseudomonadota</taxon>
        <taxon>Gammaproteobacteria</taxon>
        <taxon>Enterobacterales</taxon>
        <taxon>Enterobacteriaceae</taxon>
        <taxon>Escherichia</taxon>
    </lineage>
</organism>
<sequence length="170" mass="18880">MSGILTRWRQFGKRYFWPHLLLGMVAASLGLPALSNAAEPNAPAKATTRNHEPSAKVNFGQLALLEANTRRPNSNYSVDYWHQHAIRTVIRHLSFAMAPQTLPVAEESLPLQAQHLALLDTLSALLTQEGTPSEKGYRIDYAHFTPQAKFSTPVWISQAQGIRAGPQRLT</sequence>
<keyword id="KW-0963">Cytoplasm</keyword>
<keyword id="KW-0574">Periplasm</keyword>
<keyword id="KW-1185">Reference proteome</keyword>
<keyword id="KW-0732">Signal</keyword>
<dbReference type="EMBL" id="CU928145">
    <property type="protein sequence ID" value="CAU95981.1"/>
    <property type="molecule type" value="Genomic_DNA"/>
</dbReference>
<dbReference type="RefSeq" id="WP_000014321.1">
    <property type="nucleotide sequence ID" value="NC_011748.1"/>
</dbReference>
<dbReference type="SMR" id="B7LFW7"/>
<dbReference type="GeneID" id="93777337"/>
<dbReference type="KEGG" id="eck:EC55989_0093"/>
<dbReference type="HOGENOM" id="CLU_108853_0_0_6"/>
<dbReference type="Proteomes" id="UP000000746">
    <property type="component" value="Chromosome"/>
</dbReference>
<dbReference type="GO" id="GO:0005829">
    <property type="term" value="C:cytosol"/>
    <property type="evidence" value="ECO:0007669"/>
    <property type="project" value="UniProtKB-SubCell"/>
</dbReference>
<dbReference type="GO" id="GO:0042597">
    <property type="term" value="C:periplasmic space"/>
    <property type="evidence" value="ECO:0007669"/>
    <property type="project" value="UniProtKB-SubCell"/>
</dbReference>
<dbReference type="GO" id="GO:0045182">
    <property type="term" value="F:translation regulator activity"/>
    <property type="evidence" value="ECO:0007669"/>
    <property type="project" value="InterPro"/>
</dbReference>
<dbReference type="HAMAP" id="MF_01332">
    <property type="entry name" value="SecM"/>
    <property type="match status" value="1"/>
</dbReference>
<dbReference type="InterPro" id="IPR009502">
    <property type="entry name" value="SecM"/>
</dbReference>
<dbReference type="NCBIfam" id="NF002799">
    <property type="entry name" value="PRK02943.1-1"/>
    <property type="match status" value="1"/>
</dbReference>
<dbReference type="Pfam" id="PF06558">
    <property type="entry name" value="SecM"/>
    <property type="match status" value="1"/>
</dbReference>
<dbReference type="PIRSF" id="PIRSF004572">
    <property type="entry name" value="SecM"/>
    <property type="match status" value="1"/>
</dbReference>
<reference key="1">
    <citation type="journal article" date="2009" name="PLoS Genet.">
        <title>Organised genome dynamics in the Escherichia coli species results in highly diverse adaptive paths.</title>
        <authorList>
            <person name="Touchon M."/>
            <person name="Hoede C."/>
            <person name="Tenaillon O."/>
            <person name="Barbe V."/>
            <person name="Baeriswyl S."/>
            <person name="Bidet P."/>
            <person name="Bingen E."/>
            <person name="Bonacorsi S."/>
            <person name="Bouchier C."/>
            <person name="Bouvet O."/>
            <person name="Calteau A."/>
            <person name="Chiapello H."/>
            <person name="Clermont O."/>
            <person name="Cruveiller S."/>
            <person name="Danchin A."/>
            <person name="Diard M."/>
            <person name="Dossat C."/>
            <person name="Karoui M.E."/>
            <person name="Frapy E."/>
            <person name="Garry L."/>
            <person name="Ghigo J.M."/>
            <person name="Gilles A.M."/>
            <person name="Johnson J."/>
            <person name="Le Bouguenec C."/>
            <person name="Lescat M."/>
            <person name="Mangenot S."/>
            <person name="Martinez-Jehanne V."/>
            <person name="Matic I."/>
            <person name="Nassif X."/>
            <person name="Oztas S."/>
            <person name="Petit M.A."/>
            <person name="Pichon C."/>
            <person name="Rouy Z."/>
            <person name="Ruf C.S."/>
            <person name="Schneider D."/>
            <person name="Tourret J."/>
            <person name="Vacherie B."/>
            <person name="Vallenet D."/>
            <person name="Medigue C."/>
            <person name="Rocha E.P.C."/>
            <person name="Denamur E."/>
        </authorList>
    </citation>
    <scope>NUCLEOTIDE SEQUENCE [LARGE SCALE GENOMIC DNA]</scope>
    <source>
        <strain>55989 / EAEC</strain>
    </source>
</reference>
<comment type="function">
    <text evidence="1">Regulates secA expression by translational coupling of the secM secA operon. Translational pausing at a specific Pro residue 5 residues before the end of the protein may allow disruption of a mRNA repressor helix that normally suppresses secA translation initiation.</text>
</comment>
<comment type="subcellular location">
    <subcellularLocation>
        <location evidence="1">Cytoplasm</location>
        <location evidence="1">Cytosol</location>
    </subcellularLocation>
    <subcellularLocation>
        <location evidence="1">Periplasm</location>
    </subcellularLocation>
    <text evidence="1">The active form is cytosolic, while the periplasmic form is rapidly degraded, mainly by the tail-specific protease.</text>
</comment>
<comment type="similarity">
    <text evidence="1">Belongs to the SecM family.</text>
</comment>
<gene>
    <name evidence="1" type="primary">secM</name>
    <name type="ordered locus">EC55989_0093</name>
</gene>
<feature type="signal peptide" evidence="1">
    <location>
        <begin position="1"/>
        <end position="37"/>
    </location>
</feature>
<feature type="chain" id="PRO_1000166096" description="Secretion monitor">
    <location>
        <begin position="38"/>
        <end position="170"/>
    </location>
</feature>
<protein>
    <recommendedName>
        <fullName evidence="1">Secretion monitor</fullName>
    </recommendedName>
</protein>
<accession>B7LFW7</accession>
<proteinExistence type="inferred from homology"/>